<feature type="chain" id="PRO_1000203075" description="Aspartyl/glutamyl-tRNA(Asn/Gln) amidotransferase subunit C">
    <location>
        <begin position="1"/>
        <end position="95"/>
    </location>
</feature>
<keyword id="KW-0067">ATP-binding</keyword>
<keyword id="KW-0436">Ligase</keyword>
<keyword id="KW-0547">Nucleotide-binding</keyword>
<keyword id="KW-0648">Protein biosynthesis</keyword>
<dbReference type="EC" id="6.3.5.-" evidence="1"/>
<dbReference type="EMBL" id="AM181176">
    <property type="protein sequence ID" value="CAY47129.1"/>
    <property type="molecule type" value="Genomic_DNA"/>
</dbReference>
<dbReference type="RefSeq" id="WP_012722223.1">
    <property type="nucleotide sequence ID" value="NC_012660.1"/>
</dbReference>
<dbReference type="SMR" id="C3K6Y5"/>
<dbReference type="STRING" id="294.SRM1_00884"/>
<dbReference type="GeneID" id="93462485"/>
<dbReference type="PATRIC" id="fig|216595.4.peg.1098"/>
<dbReference type="eggNOG" id="COG0721">
    <property type="taxonomic scope" value="Bacteria"/>
</dbReference>
<dbReference type="HOGENOM" id="CLU_105899_2_2_6"/>
<dbReference type="OrthoDB" id="9794326at2"/>
<dbReference type="GO" id="GO:0050566">
    <property type="term" value="F:asparaginyl-tRNA synthase (glutamine-hydrolyzing) activity"/>
    <property type="evidence" value="ECO:0007669"/>
    <property type="project" value="RHEA"/>
</dbReference>
<dbReference type="GO" id="GO:0005524">
    <property type="term" value="F:ATP binding"/>
    <property type="evidence" value="ECO:0007669"/>
    <property type="project" value="UniProtKB-KW"/>
</dbReference>
<dbReference type="GO" id="GO:0050567">
    <property type="term" value="F:glutaminyl-tRNA synthase (glutamine-hydrolyzing) activity"/>
    <property type="evidence" value="ECO:0007669"/>
    <property type="project" value="UniProtKB-UniRule"/>
</dbReference>
<dbReference type="GO" id="GO:0070681">
    <property type="term" value="P:glutaminyl-tRNAGln biosynthesis via transamidation"/>
    <property type="evidence" value="ECO:0007669"/>
    <property type="project" value="TreeGrafter"/>
</dbReference>
<dbReference type="GO" id="GO:0006450">
    <property type="term" value="P:regulation of translational fidelity"/>
    <property type="evidence" value="ECO:0007669"/>
    <property type="project" value="InterPro"/>
</dbReference>
<dbReference type="GO" id="GO:0006412">
    <property type="term" value="P:translation"/>
    <property type="evidence" value="ECO:0007669"/>
    <property type="project" value="UniProtKB-UniRule"/>
</dbReference>
<dbReference type="Gene3D" id="1.10.20.60">
    <property type="entry name" value="Glu-tRNAGln amidotransferase C subunit, N-terminal domain"/>
    <property type="match status" value="1"/>
</dbReference>
<dbReference type="HAMAP" id="MF_00122">
    <property type="entry name" value="GatC"/>
    <property type="match status" value="1"/>
</dbReference>
<dbReference type="InterPro" id="IPR036113">
    <property type="entry name" value="Asp/Glu-ADT_sf_sub_c"/>
</dbReference>
<dbReference type="InterPro" id="IPR003837">
    <property type="entry name" value="GatC"/>
</dbReference>
<dbReference type="NCBIfam" id="TIGR00135">
    <property type="entry name" value="gatC"/>
    <property type="match status" value="1"/>
</dbReference>
<dbReference type="PANTHER" id="PTHR15004">
    <property type="entry name" value="GLUTAMYL-TRNA(GLN) AMIDOTRANSFERASE SUBUNIT C, MITOCHONDRIAL"/>
    <property type="match status" value="1"/>
</dbReference>
<dbReference type="PANTHER" id="PTHR15004:SF0">
    <property type="entry name" value="GLUTAMYL-TRNA(GLN) AMIDOTRANSFERASE SUBUNIT C, MITOCHONDRIAL"/>
    <property type="match status" value="1"/>
</dbReference>
<dbReference type="Pfam" id="PF02686">
    <property type="entry name" value="GatC"/>
    <property type="match status" value="1"/>
</dbReference>
<dbReference type="SUPFAM" id="SSF141000">
    <property type="entry name" value="Glu-tRNAGln amidotransferase C subunit"/>
    <property type="match status" value="1"/>
</dbReference>
<organism>
    <name type="scientific">Pseudomonas fluorescens (strain SBW25)</name>
    <dbReference type="NCBI Taxonomy" id="216595"/>
    <lineage>
        <taxon>Bacteria</taxon>
        <taxon>Pseudomonadati</taxon>
        <taxon>Pseudomonadota</taxon>
        <taxon>Gammaproteobacteria</taxon>
        <taxon>Pseudomonadales</taxon>
        <taxon>Pseudomonadaceae</taxon>
        <taxon>Pseudomonas</taxon>
    </lineage>
</organism>
<evidence type="ECO:0000255" key="1">
    <source>
        <dbReference type="HAMAP-Rule" id="MF_00122"/>
    </source>
</evidence>
<proteinExistence type="inferred from homology"/>
<protein>
    <recommendedName>
        <fullName evidence="1">Aspartyl/glutamyl-tRNA(Asn/Gln) amidotransferase subunit C</fullName>
        <shortName evidence="1">Asp/Glu-ADT subunit C</shortName>
        <ecNumber evidence="1">6.3.5.-</ecNumber>
    </recommendedName>
</protein>
<sequence length="95" mass="10280">MTLERSDVEKIAHLASLGLNEDDLPQTTAALNSILGLVDQMQAVNTDGIEPLAHPLEASQRLRADVVTESNNREAYQSIAPAVENGLYLVPKVID</sequence>
<comment type="function">
    <text evidence="1">Allows the formation of correctly charged Asn-tRNA(Asn) or Gln-tRNA(Gln) through the transamidation of misacylated Asp-tRNA(Asn) or Glu-tRNA(Gln) in organisms which lack either or both of asparaginyl-tRNA or glutaminyl-tRNA synthetases. The reaction takes place in the presence of glutamine and ATP through an activated phospho-Asp-tRNA(Asn) or phospho-Glu-tRNA(Gln).</text>
</comment>
<comment type="catalytic activity">
    <reaction evidence="1">
        <text>L-glutamyl-tRNA(Gln) + L-glutamine + ATP + H2O = L-glutaminyl-tRNA(Gln) + L-glutamate + ADP + phosphate + H(+)</text>
        <dbReference type="Rhea" id="RHEA:17521"/>
        <dbReference type="Rhea" id="RHEA-COMP:9681"/>
        <dbReference type="Rhea" id="RHEA-COMP:9684"/>
        <dbReference type="ChEBI" id="CHEBI:15377"/>
        <dbReference type="ChEBI" id="CHEBI:15378"/>
        <dbReference type="ChEBI" id="CHEBI:29985"/>
        <dbReference type="ChEBI" id="CHEBI:30616"/>
        <dbReference type="ChEBI" id="CHEBI:43474"/>
        <dbReference type="ChEBI" id="CHEBI:58359"/>
        <dbReference type="ChEBI" id="CHEBI:78520"/>
        <dbReference type="ChEBI" id="CHEBI:78521"/>
        <dbReference type="ChEBI" id="CHEBI:456216"/>
    </reaction>
</comment>
<comment type="catalytic activity">
    <reaction evidence="1">
        <text>L-aspartyl-tRNA(Asn) + L-glutamine + ATP + H2O = L-asparaginyl-tRNA(Asn) + L-glutamate + ADP + phosphate + 2 H(+)</text>
        <dbReference type="Rhea" id="RHEA:14513"/>
        <dbReference type="Rhea" id="RHEA-COMP:9674"/>
        <dbReference type="Rhea" id="RHEA-COMP:9677"/>
        <dbReference type="ChEBI" id="CHEBI:15377"/>
        <dbReference type="ChEBI" id="CHEBI:15378"/>
        <dbReference type="ChEBI" id="CHEBI:29985"/>
        <dbReference type="ChEBI" id="CHEBI:30616"/>
        <dbReference type="ChEBI" id="CHEBI:43474"/>
        <dbReference type="ChEBI" id="CHEBI:58359"/>
        <dbReference type="ChEBI" id="CHEBI:78515"/>
        <dbReference type="ChEBI" id="CHEBI:78516"/>
        <dbReference type="ChEBI" id="CHEBI:456216"/>
    </reaction>
</comment>
<comment type="subunit">
    <text evidence="1">Heterotrimer of A, B and C subunits.</text>
</comment>
<comment type="similarity">
    <text evidence="1">Belongs to the GatC family.</text>
</comment>
<gene>
    <name evidence="1" type="primary">gatC</name>
    <name type="ordered locus">PFLU_0862</name>
</gene>
<name>GATC_PSEFS</name>
<accession>C3K6Y5</accession>
<reference key="1">
    <citation type="journal article" date="2009" name="Genome Biol.">
        <title>Genomic and genetic analyses of diversity and plant interactions of Pseudomonas fluorescens.</title>
        <authorList>
            <person name="Silby M.W."/>
            <person name="Cerdeno-Tarraga A.M."/>
            <person name="Vernikos G.S."/>
            <person name="Giddens S.R."/>
            <person name="Jackson R.W."/>
            <person name="Preston G.M."/>
            <person name="Zhang X.-X."/>
            <person name="Moon C.D."/>
            <person name="Gehrig S.M."/>
            <person name="Godfrey S.A.C."/>
            <person name="Knight C.G."/>
            <person name="Malone J.G."/>
            <person name="Robinson Z."/>
            <person name="Spiers A.J."/>
            <person name="Harris S."/>
            <person name="Challis G.L."/>
            <person name="Yaxley A.M."/>
            <person name="Harris D."/>
            <person name="Seeger K."/>
            <person name="Murphy L."/>
            <person name="Rutter S."/>
            <person name="Squares R."/>
            <person name="Quail M.A."/>
            <person name="Saunders E."/>
            <person name="Mavromatis K."/>
            <person name="Brettin T.S."/>
            <person name="Bentley S.D."/>
            <person name="Hothersall J."/>
            <person name="Stephens E."/>
            <person name="Thomas C.M."/>
            <person name="Parkhill J."/>
            <person name="Levy S.B."/>
            <person name="Rainey P.B."/>
            <person name="Thomson N.R."/>
        </authorList>
    </citation>
    <scope>NUCLEOTIDE SEQUENCE [LARGE SCALE GENOMIC DNA]</scope>
    <source>
        <strain>SBW25</strain>
    </source>
</reference>